<sequence>MGEFKVDKFNIEDFFSGDLDIFNYSSGMPSILPDAVPCHSENLEINSYAVVVIYVLVTLLSLVGNSLVMLVILYNRSTCSVTDVYLLNLAIADLFFALTLPVWAASKVNGWTFGSTLCKIFSYVKEVTFYSSVLLLACISMDRYLAIVHATSTLIQKRHLVKFVCIAMWLLSVILALPILILRNPVKVNLSTLVCYEDVGNNTSRLRVVLRILPQTFGFLVPLLIMLFCYGFTLRTLFKAHMGQKHRAMRVIFAVVLVFLLCWLPYNLVLFTDTLMRTKLIKETCERRDDIDKALNATEILGFLHSCLNPIIYAFIGQKFRHGLLKIMATYGLVSKEFLAKEGRPSFVSSSSANTSTTL</sequence>
<accession>P35343</accession>
<accession>Q53X27</accession>
<dbReference type="EMBL" id="L23637">
    <property type="protein sequence ID" value="AAA39305.1"/>
    <property type="molecule type" value="Genomic_DNA"/>
</dbReference>
<dbReference type="EMBL" id="L26549">
    <property type="protein sequence ID" value="AAL31314.1"/>
    <property type="molecule type" value="Genomic_DNA"/>
</dbReference>
<dbReference type="EMBL" id="L13239">
    <property type="protein sequence ID" value="AAA62109.1"/>
    <property type="molecule type" value="Genomic_DNA"/>
</dbReference>
<dbReference type="EMBL" id="U31207">
    <property type="protein sequence ID" value="AAC52239.1"/>
    <property type="molecule type" value="Genomic_DNA"/>
</dbReference>
<dbReference type="EMBL" id="D17630">
    <property type="protein sequence ID" value="BAA04536.1"/>
    <property type="molecule type" value="mRNA"/>
</dbReference>
<dbReference type="EMBL" id="AK158234">
    <property type="protein sequence ID" value="BAE34417.1"/>
    <property type="molecule type" value="mRNA"/>
</dbReference>
<dbReference type="EMBL" id="CH466548">
    <property type="protein sequence ID" value="EDL00307.1"/>
    <property type="molecule type" value="Genomic_DNA"/>
</dbReference>
<dbReference type="EMBL" id="BC051677">
    <property type="protein sequence ID" value="AAH51677.1"/>
    <property type="molecule type" value="mRNA"/>
</dbReference>
<dbReference type="EMBL" id="L20337">
    <property type="protein sequence ID" value="AAA16853.1"/>
    <property type="molecule type" value="mRNA"/>
</dbReference>
<dbReference type="CCDS" id="CCDS15040.1"/>
<dbReference type="PIR" id="A48921">
    <property type="entry name" value="A48921"/>
</dbReference>
<dbReference type="RefSeq" id="NP_034039.1">
    <property type="nucleotide sequence ID" value="NM_009909.3"/>
</dbReference>
<dbReference type="RefSeq" id="XP_006495701.1">
    <property type="nucleotide sequence ID" value="XM_006495638.5"/>
</dbReference>
<dbReference type="SMR" id="P35343"/>
<dbReference type="CORUM" id="P35343"/>
<dbReference type="FunCoup" id="P35343">
    <property type="interactions" value="856"/>
</dbReference>
<dbReference type="STRING" id="10090.ENSMUSP00000102512"/>
<dbReference type="BindingDB" id="P35343"/>
<dbReference type="ChEMBL" id="CHEMBL4105830"/>
<dbReference type="GuidetoPHARMACOLOGY" id="69"/>
<dbReference type="GlyCosmos" id="P35343">
    <property type="glycosylation" value="1 site, No reported glycans"/>
</dbReference>
<dbReference type="GlyGen" id="P35343">
    <property type="glycosylation" value="1 site"/>
</dbReference>
<dbReference type="iPTMnet" id="P35343"/>
<dbReference type="PhosphoSitePlus" id="P35343"/>
<dbReference type="PaxDb" id="10090-ENSMUSP00000102512"/>
<dbReference type="ProteomicsDB" id="279245"/>
<dbReference type="DNASU" id="12765"/>
<dbReference type="Ensembl" id="ENSMUST00000106899.4">
    <property type="protein sequence ID" value="ENSMUSP00000102512.3"/>
    <property type="gene ID" value="ENSMUSG00000026180.10"/>
</dbReference>
<dbReference type="GeneID" id="12765"/>
<dbReference type="KEGG" id="mmu:12765"/>
<dbReference type="UCSC" id="uc007bll.1">
    <property type="organism name" value="mouse"/>
</dbReference>
<dbReference type="AGR" id="MGI:105303"/>
<dbReference type="CTD" id="3579"/>
<dbReference type="MGI" id="MGI:105303">
    <property type="gene designation" value="Cxcr2"/>
</dbReference>
<dbReference type="VEuPathDB" id="HostDB:ENSMUSG00000026180"/>
<dbReference type="eggNOG" id="KOG3656">
    <property type="taxonomic scope" value="Eukaryota"/>
</dbReference>
<dbReference type="GeneTree" id="ENSGT01050000244848"/>
<dbReference type="HOGENOM" id="CLU_009579_8_3_1"/>
<dbReference type="InParanoid" id="P35343"/>
<dbReference type="OMA" id="YSPCEIS"/>
<dbReference type="OrthoDB" id="9946013at2759"/>
<dbReference type="PhylomeDB" id="P35343"/>
<dbReference type="TreeFam" id="TF330966"/>
<dbReference type="Reactome" id="R-MMU-380108">
    <property type="pathway name" value="Chemokine receptors bind chemokines"/>
</dbReference>
<dbReference type="Reactome" id="R-MMU-418594">
    <property type="pathway name" value="G alpha (i) signalling events"/>
</dbReference>
<dbReference type="Reactome" id="R-MMU-6798695">
    <property type="pathway name" value="Neutrophil degranulation"/>
</dbReference>
<dbReference type="BioGRID-ORCS" id="12765">
    <property type="hits" value="1 hit in 77 CRISPR screens"/>
</dbReference>
<dbReference type="ChiTaRS" id="Cxcr2">
    <property type="organism name" value="mouse"/>
</dbReference>
<dbReference type="PRO" id="PR:P35343"/>
<dbReference type="Proteomes" id="UP000000589">
    <property type="component" value="Chromosome 1"/>
</dbReference>
<dbReference type="RNAct" id="P35343">
    <property type="molecule type" value="protein"/>
</dbReference>
<dbReference type="Bgee" id="ENSMUSG00000026180">
    <property type="expression patterns" value="Expressed in granulocyte and 20 other cell types or tissues"/>
</dbReference>
<dbReference type="GO" id="GO:0009986">
    <property type="term" value="C:cell surface"/>
    <property type="evidence" value="ECO:0007669"/>
    <property type="project" value="Ensembl"/>
</dbReference>
<dbReference type="GO" id="GO:0042629">
    <property type="term" value="C:mast cell granule"/>
    <property type="evidence" value="ECO:0007669"/>
    <property type="project" value="Ensembl"/>
</dbReference>
<dbReference type="GO" id="GO:0072686">
    <property type="term" value="C:mitotic spindle"/>
    <property type="evidence" value="ECO:0007669"/>
    <property type="project" value="Ensembl"/>
</dbReference>
<dbReference type="GO" id="GO:0005654">
    <property type="term" value="C:nucleoplasm"/>
    <property type="evidence" value="ECO:0007669"/>
    <property type="project" value="Ensembl"/>
</dbReference>
<dbReference type="GO" id="GO:0005886">
    <property type="term" value="C:plasma membrane"/>
    <property type="evidence" value="ECO:0007669"/>
    <property type="project" value="UniProtKB-SubCell"/>
</dbReference>
<dbReference type="GO" id="GO:0004950">
    <property type="term" value="F:chemokine receptor activity"/>
    <property type="evidence" value="ECO:0000314"/>
    <property type="project" value="MGI"/>
</dbReference>
<dbReference type="GO" id="GO:0019959">
    <property type="term" value="F:interleukin-8 binding"/>
    <property type="evidence" value="ECO:0007669"/>
    <property type="project" value="Ensembl"/>
</dbReference>
<dbReference type="GO" id="GO:0004918">
    <property type="term" value="F:interleukin-8 receptor activity"/>
    <property type="evidence" value="ECO:0000304"/>
    <property type="project" value="MGI"/>
</dbReference>
<dbReference type="GO" id="GO:0006968">
    <property type="term" value="P:cellular defense response"/>
    <property type="evidence" value="ECO:0007669"/>
    <property type="project" value="Ensembl"/>
</dbReference>
<dbReference type="GO" id="GO:0006935">
    <property type="term" value="P:chemotaxis"/>
    <property type="evidence" value="ECO:0000304"/>
    <property type="project" value="MGI"/>
</dbReference>
<dbReference type="GO" id="GO:0043066">
    <property type="term" value="P:negative regulation of apoptotic process"/>
    <property type="evidence" value="ECO:0000315"/>
    <property type="project" value="MGI"/>
</dbReference>
<dbReference type="GO" id="GO:0042119">
    <property type="term" value="P:neutrophil activation"/>
    <property type="evidence" value="ECO:0007669"/>
    <property type="project" value="Ensembl"/>
</dbReference>
<dbReference type="GO" id="GO:0030593">
    <property type="term" value="P:neutrophil chemotaxis"/>
    <property type="evidence" value="ECO:0007669"/>
    <property type="project" value="Ensembl"/>
</dbReference>
<dbReference type="GO" id="GO:0007200">
    <property type="term" value="P:phospholipase C-activating G protein-coupled receptor signaling pathway"/>
    <property type="evidence" value="ECO:0007669"/>
    <property type="project" value="Ensembl"/>
</dbReference>
<dbReference type="GO" id="GO:0008284">
    <property type="term" value="P:positive regulation of cell population proliferation"/>
    <property type="evidence" value="ECO:0007669"/>
    <property type="project" value="Ensembl"/>
</dbReference>
<dbReference type="GO" id="GO:0031623">
    <property type="term" value="P:receptor internalization"/>
    <property type="evidence" value="ECO:0007669"/>
    <property type="project" value="Ensembl"/>
</dbReference>
<dbReference type="CDD" id="cd15178">
    <property type="entry name" value="7tmA_CXCR1_2"/>
    <property type="match status" value="1"/>
</dbReference>
<dbReference type="FunFam" id="1.20.1070.10:FF:000157">
    <property type="entry name" value="C-X-C chemokine receptor type 2"/>
    <property type="match status" value="1"/>
</dbReference>
<dbReference type="Gene3D" id="1.20.1070.10">
    <property type="entry name" value="Rhodopsin 7-helix transmembrane proteins"/>
    <property type="match status" value="1"/>
</dbReference>
<dbReference type="InterPro" id="IPR050119">
    <property type="entry name" value="CCR1-9-like"/>
</dbReference>
<dbReference type="InterPro" id="IPR000057">
    <property type="entry name" value="Chemokine_CXCR2"/>
</dbReference>
<dbReference type="InterPro" id="IPR000174">
    <property type="entry name" value="Chemokine_CXCR_1/2"/>
</dbReference>
<dbReference type="InterPro" id="IPR000276">
    <property type="entry name" value="GPCR_Rhodpsn"/>
</dbReference>
<dbReference type="InterPro" id="IPR017452">
    <property type="entry name" value="GPCR_Rhodpsn_7TM"/>
</dbReference>
<dbReference type="PANTHER" id="PTHR10489:SF689">
    <property type="entry name" value="C-X-C CHEMOKINE RECEPTOR TYPE 2"/>
    <property type="match status" value="1"/>
</dbReference>
<dbReference type="PANTHER" id="PTHR10489">
    <property type="entry name" value="CELL ADHESION MOLECULE"/>
    <property type="match status" value="1"/>
</dbReference>
<dbReference type="Pfam" id="PF00001">
    <property type="entry name" value="7tm_1"/>
    <property type="match status" value="1"/>
</dbReference>
<dbReference type="PRINTS" id="PR00237">
    <property type="entry name" value="GPCRRHODOPSN"/>
</dbReference>
<dbReference type="PRINTS" id="PR00427">
    <property type="entry name" value="INTRLEUKIN8R"/>
</dbReference>
<dbReference type="PRINTS" id="PR00573">
    <property type="entry name" value="INTRLEUKN8BR"/>
</dbReference>
<dbReference type="SUPFAM" id="SSF81321">
    <property type="entry name" value="Family A G protein-coupled receptor-like"/>
    <property type="match status" value="1"/>
</dbReference>
<dbReference type="PROSITE" id="PS00237">
    <property type="entry name" value="G_PROTEIN_RECEP_F1_1"/>
    <property type="match status" value="1"/>
</dbReference>
<dbReference type="PROSITE" id="PS50262">
    <property type="entry name" value="G_PROTEIN_RECEP_F1_2"/>
    <property type="match status" value="1"/>
</dbReference>
<gene>
    <name type="primary">Cxcr2</name>
    <name type="synonym">Cmkar2</name>
    <name type="synonym">Gpcr16</name>
    <name type="synonym">Il8rb</name>
</gene>
<reference key="1">
    <citation type="journal article" date="1993" name="Genomics">
        <title>The murine homologue of the human interleukin-8 receptor type B maps near the Ity-Lsh-Bcg disease resistance locus.</title>
        <authorList>
            <person name="Cerretti D.P."/>
            <person name="Nelson N."/>
            <person name="Kozlosky C.J."/>
            <person name="Morrissey P.J."/>
            <person name="Copeland N.G."/>
            <person name="Gilbert D.J."/>
            <person name="Jenkins N.A."/>
            <person name="Dosik J.K."/>
            <person name="Mock B.A."/>
        </authorList>
    </citation>
    <scope>NUCLEOTIDE SEQUENCE [GENOMIC DNA]</scope>
</reference>
<reference key="2">
    <citation type="journal article" date="1994" name="J. Biol. Chem.">
        <title>The N-terminus of interleukin-8 (IL-8) receptor confers high affinity binding to human IL-8.</title>
        <authorList>
            <person name="Suzuki H."/>
            <person name="Prado G.N."/>
            <person name="Wilkinson N."/>
            <person name="Navarro J."/>
        </authorList>
    </citation>
    <scope>NUCLEOTIDE SEQUENCE [GENOMIC DNA]</scope>
</reference>
<reference key="3">
    <citation type="journal article" date="1994" name="J. Biol. Chem.">
        <title>The murine interleukin 8 type B receptor homologue and its ligands. Expression and biological characterization.</title>
        <authorList>
            <person name="Bozic C.R."/>
            <person name="Gerard N.P."/>
            <person name="von Uexkull-Guldenband C."/>
            <person name="Kolakowski L.F. Jr."/>
            <person name="Conklyn M.J."/>
            <person name="Breslow R."/>
            <person name="Showell H.J."/>
            <person name="Gerard C."/>
        </authorList>
    </citation>
    <scope>NUCLEOTIDE SEQUENCE [GENOMIC DNA]</scope>
    <source>
        <strain>BALB/cJ</strain>
    </source>
</reference>
<reference key="4">
    <citation type="journal article" date="1995" name="J. Immunol.">
        <title>Chemokine binding and activities mediated by the mouse IL-8 receptor.</title>
        <authorList>
            <person name="Lee J."/>
            <person name="Cacalano G."/>
            <person name="Camerato T."/>
            <person name="Toy K."/>
            <person name="Moore M.W."/>
            <person name="Wood W.I."/>
        </authorList>
    </citation>
    <scope>NUCLEOTIDE SEQUENCE [GENOMIC DNA]</scope>
    <source>
        <strain>129/Sv</strain>
    </source>
</reference>
<reference key="5">
    <citation type="journal article" date="1994" name="Gene">
        <title>Cloning of a cDNA encoding a mouse homolog of the interleukin-8 receptor.</title>
        <authorList>
            <person name="Harada A."/>
            <person name="Kuno K."/>
            <person name="Nomura H."/>
            <person name="Mukaida N."/>
            <person name="Murakami S."/>
            <person name="Matsushima K."/>
        </authorList>
    </citation>
    <scope>NUCLEOTIDE SEQUENCE [MRNA]</scope>
</reference>
<reference key="6">
    <citation type="journal article" date="2005" name="Science">
        <title>The transcriptional landscape of the mammalian genome.</title>
        <authorList>
            <person name="Carninci P."/>
            <person name="Kasukawa T."/>
            <person name="Katayama S."/>
            <person name="Gough J."/>
            <person name="Frith M.C."/>
            <person name="Maeda N."/>
            <person name="Oyama R."/>
            <person name="Ravasi T."/>
            <person name="Lenhard B."/>
            <person name="Wells C."/>
            <person name="Kodzius R."/>
            <person name="Shimokawa K."/>
            <person name="Bajic V.B."/>
            <person name="Brenner S.E."/>
            <person name="Batalov S."/>
            <person name="Forrest A.R."/>
            <person name="Zavolan M."/>
            <person name="Davis M.J."/>
            <person name="Wilming L.G."/>
            <person name="Aidinis V."/>
            <person name="Allen J.E."/>
            <person name="Ambesi-Impiombato A."/>
            <person name="Apweiler R."/>
            <person name="Aturaliya R.N."/>
            <person name="Bailey T.L."/>
            <person name="Bansal M."/>
            <person name="Baxter L."/>
            <person name="Beisel K.W."/>
            <person name="Bersano T."/>
            <person name="Bono H."/>
            <person name="Chalk A.M."/>
            <person name="Chiu K.P."/>
            <person name="Choudhary V."/>
            <person name="Christoffels A."/>
            <person name="Clutterbuck D.R."/>
            <person name="Crowe M.L."/>
            <person name="Dalla E."/>
            <person name="Dalrymple B.P."/>
            <person name="de Bono B."/>
            <person name="Della Gatta G."/>
            <person name="di Bernardo D."/>
            <person name="Down T."/>
            <person name="Engstrom P."/>
            <person name="Fagiolini M."/>
            <person name="Faulkner G."/>
            <person name="Fletcher C.F."/>
            <person name="Fukushima T."/>
            <person name="Furuno M."/>
            <person name="Futaki S."/>
            <person name="Gariboldi M."/>
            <person name="Georgii-Hemming P."/>
            <person name="Gingeras T.R."/>
            <person name="Gojobori T."/>
            <person name="Green R.E."/>
            <person name="Gustincich S."/>
            <person name="Harbers M."/>
            <person name="Hayashi Y."/>
            <person name="Hensch T.K."/>
            <person name="Hirokawa N."/>
            <person name="Hill D."/>
            <person name="Huminiecki L."/>
            <person name="Iacono M."/>
            <person name="Ikeo K."/>
            <person name="Iwama A."/>
            <person name="Ishikawa T."/>
            <person name="Jakt M."/>
            <person name="Kanapin A."/>
            <person name="Katoh M."/>
            <person name="Kawasawa Y."/>
            <person name="Kelso J."/>
            <person name="Kitamura H."/>
            <person name="Kitano H."/>
            <person name="Kollias G."/>
            <person name="Krishnan S.P."/>
            <person name="Kruger A."/>
            <person name="Kummerfeld S.K."/>
            <person name="Kurochkin I.V."/>
            <person name="Lareau L.F."/>
            <person name="Lazarevic D."/>
            <person name="Lipovich L."/>
            <person name="Liu J."/>
            <person name="Liuni S."/>
            <person name="McWilliam S."/>
            <person name="Madan Babu M."/>
            <person name="Madera M."/>
            <person name="Marchionni L."/>
            <person name="Matsuda H."/>
            <person name="Matsuzawa S."/>
            <person name="Miki H."/>
            <person name="Mignone F."/>
            <person name="Miyake S."/>
            <person name="Morris K."/>
            <person name="Mottagui-Tabar S."/>
            <person name="Mulder N."/>
            <person name="Nakano N."/>
            <person name="Nakauchi H."/>
            <person name="Ng P."/>
            <person name="Nilsson R."/>
            <person name="Nishiguchi S."/>
            <person name="Nishikawa S."/>
            <person name="Nori F."/>
            <person name="Ohara O."/>
            <person name="Okazaki Y."/>
            <person name="Orlando V."/>
            <person name="Pang K.C."/>
            <person name="Pavan W.J."/>
            <person name="Pavesi G."/>
            <person name="Pesole G."/>
            <person name="Petrovsky N."/>
            <person name="Piazza S."/>
            <person name="Reed J."/>
            <person name="Reid J.F."/>
            <person name="Ring B.Z."/>
            <person name="Ringwald M."/>
            <person name="Rost B."/>
            <person name="Ruan Y."/>
            <person name="Salzberg S.L."/>
            <person name="Sandelin A."/>
            <person name="Schneider C."/>
            <person name="Schoenbach C."/>
            <person name="Sekiguchi K."/>
            <person name="Semple C.A."/>
            <person name="Seno S."/>
            <person name="Sessa L."/>
            <person name="Sheng Y."/>
            <person name="Shibata Y."/>
            <person name="Shimada H."/>
            <person name="Shimada K."/>
            <person name="Silva D."/>
            <person name="Sinclair B."/>
            <person name="Sperling S."/>
            <person name="Stupka E."/>
            <person name="Sugiura K."/>
            <person name="Sultana R."/>
            <person name="Takenaka Y."/>
            <person name="Taki K."/>
            <person name="Tammoja K."/>
            <person name="Tan S.L."/>
            <person name="Tang S."/>
            <person name="Taylor M.S."/>
            <person name="Tegner J."/>
            <person name="Teichmann S.A."/>
            <person name="Ueda H.R."/>
            <person name="van Nimwegen E."/>
            <person name="Verardo R."/>
            <person name="Wei C.L."/>
            <person name="Yagi K."/>
            <person name="Yamanishi H."/>
            <person name="Zabarovsky E."/>
            <person name="Zhu S."/>
            <person name="Zimmer A."/>
            <person name="Hide W."/>
            <person name="Bult C."/>
            <person name="Grimmond S.M."/>
            <person name="Teasdale R.D."/>
            <person name="Liu E.T."/>
            <person name="Brusic V."/>
            <person name="Quackenbush J."/>
            <person name="Wahlestedt C."/>
            <person name="Mattick J.S."/>
            <person name="Hume D.A."/>
            <person name="Kai C."/>
            <person name="Sasaki D."/>
            <person name="Tomaru Y."/>
            <person name="Fukuda S."/>
            <person name="Kanamori-Katayama M."/>
            <person name="Suzuki M."/>
            <person name="Aoki J."/>
            <person name="Arakawa T."/>
            <person name="Iida J."/>
            <person name="Imamura K."/>
            <person name="Itoh M."/>
            <person name="Kato T."/>
            <person name="Kawaji H."/>
            <person name="Kawagashira N."/>
            <person name="Kawashima T."/>
            <person name="Kojima M."/>
            <person name="Kondo S."/>
            <person name="Konno H."/>
            <person name="Nakano K."/>
            <person name="Ninomiya N."/>
            <person name="Nishio T."/>
            <person name="Okada M."/>
            <person name="Plessy C."/>
            <person name="Shibata K."/>
            <person name="Shiraki T."/>
            <person name="Suzuki S."/>
            <person name="Tagami M."/>
            <person name="Waki K."/>
            <person name="Watahiki A."/>
            <person name="Okamura-Oho Y."/>
            <person name="Suzuki H."/>
            <person name="Kawai J."/>
            <person name="Hayashizaki Y."/>
        </authorList>
    </citation>
    <scope>NUCLEOTIDE SEQUENCE [LARGE SCALE MRNA]</scope>
    <source>
        <strain>C57BL/6J</strain>
        <tissue>Inner ear</tissue>
    </source>
</reference>
<reference key="7">
    <citation type="submission" date="2005-07" db="EMBL/GenBank/DDBJ databases">
        <authorList>
            <person name="Mural R.J."/>
            <person name="Adams M.D."/>
            <person name="Myers E.W."/>
            <person name="Smith H.O."/>
            <person name="Venter J.C."/>
        </authorList>
    </citation>
    <scope>NUCLEOTIDE SEQUENCE [LARGE SCALE GENOMIC DNA]</scope>
</reference>
<reference key="8">
    <citation type="journal article" date="2004" name="Genome Res.">
        <title>The status, quality, and expansion of the NIH full-length cDNA project: the Mammalian Gene Collection (MGC).</title>
        <authorList>
            <consortium name="The MGC Project Team"/>
        </authorList>
    </citation>
    <scope>NUCLEOTIDE SEQUENCE [LARGE SCALE MRNA]</scope>
    <source>
        <tissue>Trophoblast</tissue>
    </source>
</reference>
<reference key="9">
    <citation type="journal article" date="1993" name="Genomics">
        <title>Identification, chromosomal location, and genome organization of mammalian G-protein-coupled receptors.</title>
        <authorList>
            <person name="Wilkie T.M."/>
            <person name="Chen Y."/>
            <person name="Gilbert D.J."/>
            <person name="Moore K.J."/>
            <person name="Yu L."/>
            <person name="Simon M.I."/>
            <person name="Copeland N.G."/>
            <person name="Jenkins N.A."/>
        </authorList>
    </citation>
    <scope>NUCLEOTIDE SEQUENCE [MRNA] OF 145-258</scope>
    <source>
        <tissue>Testis</tissue>
    </source>
</reference>
<reference key="10">
    <citation type="journal article" date="2004" name="J. Immunol.">
        <title>IL-10-conditioned dendritic cells, decommissioned for recruitment of adaptive immunity, elicit innate inflammatory gene products in response to danger signals.</title>
        <authorList>
            <person name="Nolan K.F."/>
            <person name="Strong V."/>
            <person name="Soler D."/>
            <person name="Fairchild P.J."/>
            <person name="Cobbold S.P."/>
            <person name="Croxton R."/>
            <person name="Gonzalo J.-A."/>
            <person name="Rubio A."/>
            <person name="Wells M."/>
            <person name="Waldmann H."/>
        </authorList>
    </citation>
    <scope>FUNCTION</scope>
</reference>
<feature type="chain" id="PRO_0000069339" description="C-X-C chemokine receptor type 2">
    <location>
        <begin position="1"/>
        <end position="359"/>
    </location>
</feature>
<feature type="topological domain" description="Extracellular" evidence="3">
    <location>
        <begin position="1"/>
        <end position="47"/>
    </location>
</feature>
<feature type="transmembrane region" description="Helical; Name=1" evidence="3">
    <location>
        <begin position="48"/>
        <end position="74"/>
    </location>
</feature>
<feature type="topological domain" description="Cytoplasmic" evidence="3">
    <location>
        <begin position="75"/>
        <end position="83"/>
    </location>
</feature>
<feature type="transmembrane region" description="Helical; Name=2" evidence="3">
    <location>
        <begin position="84"/>
        <end position="104"/>
    </location>
</feature>
<feature type="topological domain" description="Extracellular" evidence="3">
    <location>
        <begin position="105"/>
        <end position="119"/>
    </location>
</feature>
<feature type="transmembrane region" description="Helical; Name=3" evidence="3">
    <location>
        <begin position="120"/>
        <end position="141"/>
    </location>
</feature>
<feature type="topological domain" description="Cytoplasmic" evidence="3">
    <location>
        <begin position="142"/>
        <end position="162"/>
    </location>
</feature>
<feature type="transmembrane region" description="Helical; Name=4" evidence="3">
    <location>
        <begin position="163"/>
        <end position="182"/>
    </location>
</feature>
<feature type="topological domain" description="Extracellular" evidence="3">
    <location>
        <begin position="183"/>
        <end position="207"/>
    </location>
</feature>
<feature type="transmembrane region" description="Helical; Name=5" evidence="3">
    <location>
        <begin position="208"/>
        <end position="230"/>
    </location>
</feature>
<feature type="topological domain" description="Cytoplasmic" evidence="3">
    <location>
        <begin position="231"/>
        <end position="250"/>
    </location>
</feature>
<feature type="transmembrane region" description="Helical; Name=6" evidence="3">
    <location>
        <begin position="251"/>
        <end position="272"/>
    </location>
</feature>
<feature type="topological domain" description="Extracellular" evidence="3">
    <location>
        <begin position="273"/>
        <end position="293"/>
    </location>
</feature>
<feature type="transmembrane region" description="Helical; Name=7" evidence="3">
    <location>
        <begin position="294"/>
        <end position="314"/>
    </location>
</feature>
<feature type="topological domain" description="Cytoplasmic" evidence="3">
    <location>
        <begin position="315"/>
        <end position="359"/>
    </location>
</feature>
<feature type="glycosylation site" description="N-linked (GlcNAc...) asparagine" evidence="3">
    <location>
        <position position="23"/>
    </location>
</feature>
<feature type="disulfide bond" evidence="4">
    <location>
        <begin position="118"/>
        <end position="195"/>
    </location>
</feature>
<comment type="function">
    <text evidence="2">Receptor for interleukin-8 which is a powerful neutrophil chemotactic factor. Binding of IL-8 to the receptor causes activation of neutrophils. This response is mediated via a G-protein that activates a phosphatidylinositol-calcium second messenger system. Binds to IL-8 with high affinity. Also binds with high affinity to CXCL3, GRO/MGSA and NAP-2.</text>
</comment>
<comment type="subunit">
    <text evidence="2">Interacts with IL8. Interacts with GNAI2.</text>
</comment>
<comment type="subcellular location">
    <subcellularLocation>
        <location>Cell membrane</location>
        <topology>Multi-pass membrane protein</topology>
    </subcellularLocation>
</comment>
<comment type="PTM">
    <text evidence="1">Phosphorylated upon ligand binding; which is required for desensitization.</text>
</comment>
<comment type="similarity">
    <text evidence="4">Belongs to the G-protein coupled receptor 1 family.</text>
</comment>
<organism>
    <name type="scientific">Mus musculus</name>
    <name type="common">Mouse</name>
    <dbReference type="NCBI Taxonomy" id="10090"/>
    <lineage>
        <taxon>Eukaryota</taxon>
        <taxon>Metazoa</taxon>
        <taxon>Chordata</taxon>
        <taxon>Craniata</taxon>
        <taxon>Vertebrata</taxon>
        <taxon>Euteleostomi</taxon>
        <taxon>Mammalia</taxon>
        <taxon>Eutheria</taxon>
        <taxon>Euarchontoglires</taxon>
        <taxon>Glires</taxon>
        <taxon>Rodentia</taxon>
        <taxon>Myomorpha</taxon>
        <taxon>Muroidea</taxon>
        <taxon>Muridae</taxon>
        <taxon>Murinae</taxon>
        <taxon>Mus</taxon>
        <taxon>Mus</taxon>
    </lineage>
</organism>
<evidence type="ECO:0000250" key="1"/>
<evidence type="ECO:0000250" key="2">
    <source>
        <dbReference type="UniProtKB" id="P25025"/>
    </source>
</evidence>
<evidence type="ECO:0000255" key="3"/>
<evidence type="ECO:0000255" key="4">
    <source>
        <dbReference type="PROSITE-ProRule" id="PRU00521"/>
    </source>
</evidence>
<keyword id="KW-1003">Cell membrane</keyword>
<keyword id="KW-0145">Chemotaxis</keyword>
<keyword id="KW-1015">Disulfide bond</keyword>
<keyword id="KW-0297">G-protein coupled receptor</keyword>
<keyword id="KW-0325">Glycoprotein</keyword>
<keyword id="KW-0472">Membrane</keyword>
<keyword id="KW-0597">Phosphoprotein</keyword>
<keyword id="KW-0675">Receptor</keyword>
<keyword id="KW-1185">Reference proteome</keyword>
<keyword id="KW-0807">Transducer</keyword>
<keyword id="KW-0812">Transmembrane</keyword>
<keyword id="KW-1133">Transmembrane helix</keyword>
<name>CXCR2_MOUSE</name>
<protein>
    <recommendedName>
        <fullName>C-X-C chemokine receptor type 2</fullName>
        <shortName>CXC-R2</shortName>
        <shortName>CXCR-2</shortName>
    </recommendedName>
    <alternativeName>
        <fullName>GRO/MGSA receptor</fullName>
    </alternativeName>
    <alternativeName>
        <fullName>High affinity interleukin-8 receptor B</fullName>
        <shortName>IL-8R B</shortName>
    </alternativeName>
    <cdAntigenName>CD182</cdAntigenName>
</protein>
<proteinExistence type="evidence at transcript level"/>